<dbReference type="EC" id="3.4.21.-" evidence="7"/>
<dbReference type="EMBL" id="AB017065">
    <property type="protein sequence ID" value="BAB09160.1"/>
    <property type="molecule type" value="Genomic_DNA"/>
</dbReference>
<dbReference type="EMBL" id="CP002688">
    <property type="protein sequence ID" value="AED95120.1"/>
    <property type="molecule type" value="Genomic_DNA"/>
</dbReference>
<dbReference type="EMBL" id="BT014856">
    <property type="protein sequence ID" value="AAT41839.1"/>
    <property type="molecule type" value="mRNA"/>
</dbReference>
<dbReference type="EMBL" id="AK230467">
    <property type="protein sequence ID" value="BAF02261.1"/>
    <property type="molecule type" value="mRNA"/>
</dbReference>
<dbReference type="RefSeq" id="NP_568634.1">
    <property type="nucleotide sequence ID" value="NM_123820.3"/>
</dbReference>
<dbReference type="SMR" id="Q9FI12"/>
<dbReference type="STRING" id="3702.Q9FI12"/>
<dbReference type="MEROPS" id="S08.A04"/>
<dbReference type="GlyCosmos" id="Q9FI12">
    <property type="glycosylation" value="13 sites, No reported glycans"/>
</dbReference>
<dbReference type="GlyGen" id="Q9FI12">
    <property type="glycosylation" value="15 sites"/>
</dbReference>
<dbReference type="iPTMnet" id="Q9FI12"/>
<dbReference type="PaxDb" id="3702-AT5G44530.1"/>
<dbReference type="EnsemblPlants" id="AT5G44530.1">
    <property type="protein sequence ID" value="AT5G44530.1"/>
    <property type="gene ID" value="AT5G44530"/>
</dbReference>
<dbReference type="GeneID" id="834480"/>
<dbReference type="Gramene" id="AT5G44530.1">
    <property type="protein sequence ID" value="AT5G44530.1"/>
    <property type="gene ID" value="AT5G44530"/>
</dbReference>
<dbReference type="KEGG" id="ath:AT5G44530"/>
<dbReference type="Araport" id="AT5G44530"/>
<dbReference type="TAIR" id="AT5G44530"/>
<dbReference type="eggNOG" id="ENOG502QSVR">
    <property type="taxonomic scope" value="Eukaryota"/>
</dbReference>
<dbReference type="HOGENOM" id="CLU_000625_3_1_1"/>
<dbReference type="InParanoid" id="Q9FI12"/>
<dbReference type="OMA" id="CEITPDF"/>
<dbReference type="PhylomeDB" id="Q9FI12"/>
<dbReference type="PRO" id="PR:Q9FI12"/>
<dbReference type="Proteomes" id="UP000006548">
    <property type="component" value="Chromosome 5"/>
</dbReference>
<dbReference type="ExpressionAtlas" id="Q9FI12">
    <property type="expression patterns" value="baseline and differential"/>
</dbReference>
<dbReference type="GO" id="GO:0005576">
    <property type="term" value="C:extracellular region"/>
    <property type="evidence" value="ECO:0007669"/>
    <property type="project" value="UniProtKB-SubCell"/>
</dbReference>
<dbReference type="GO" id="GO:0004252">
    <property type="term" value="F:serine-type endopeptidase activity"/>
    <property type="evidence" value="ECO:0007669"/>
    <property type="project" value="InterPro"/>
</dbReference>
<dbReference type="GO" id="GO:0006508">
    <property type="term" value="P:proteolysis"/>
    <property type="evidence" value="ECO:0007669"/>
    <property type="project" value="UniProtKB-KW"/>
</dbReference>
<dbReference type="CDD" id="cd02120">
    <property type="entry name" value="PA_subtilisin_like"/>
    <property type="match status" value="1"/>
</dbReference>
<dbReference type="CDD" id="cd04852">
    <property type="entry name" value="Peptidases_S8_3"/>
    <property type="match status" value="1"/>
</dbReference>
<dbReference type="FunFam" id="3.40.50.200:FF:000006">
    <property type="entry name" value="Subtilisin-like protease SBT1.5"/>
    <property type="match status" value="1"/>
</dbReference>
<dbReference type="Gene3D" id="2.60.40.2310">
    <property type="match status" value="1"/>
</dbReference>
<dbReference type="Gene3D" id="3.50.30.30">
    <property type="match status" value="1"/>
</dbReference>
<dbReference type="Gene3D" id="3.30.70.80">
    <property type="entry name" value="Peptidase S8 propeptide/proteinase inhibitor I9"/>
    <property type="match status" value="1"/>
</dbReference>
<dbReference type="Gene3D" id="3.40.50.200">
    <property type="entry name" value="Peptidase S8/S53 domain"/>
    <property type="match status" value="1"/>
</dbReference>
<dbReference type="InterPro" id="IPR000209">
    <property type="entry name" value="Peptidase_S8/S53_dom"/>
</dbReference>
<dbReference type="InterPro" id="IPR036852">
    <property type="entry name" value="Peptidase_S8/S53_dom_sf"/>
</dbReference>
<dbReference type="InterPro" id="IPR023827">
    <property type="entry name" value="Peptidase_S8_Asp-AS"/>
</dbReference>
<dbReference type="InterPro" id="IPR023828">
    <property type="entry name" value="Peptidase_S8_Ser-AS"/>
</dbReference>
<dbReference type="InterPro" id="IPR015500">
    <property type="entry name" value="Peptidase_S8_subtilisin-rel"/>
</dbReference>
<dbReference type="InterPro" id="IPR034197">
    <property type="entry name" value="Peptidases_S8_3"/>
</dbReference>
<dbReference type="InterPro" id="IPR010259">
    <property type="entry name" value="S8pro/Inhibitor_I9"/>
</dbReference>
<dbReference type="InterPro" id="IPR037045">
    <property type="entry name" value="S8pro/Inhibitor_I9_sf"/>
</dbReference>
<dbReference type="InterPro" id="IPR045051">
    <property type="entry name" value="SBT"/>
</dbReference>
<dbReference type="InterPro" id="IPR041469">
    <property type="entry name" value="Subtilisin-like_FN3"/>
</dbReference>
<dbReference type="PANTHER" id="PTHR10795">
    <property type="entry name" value="PROPROTEIN CONVERTASE SUBTILISIN/KEXIN"/>
    <property type="match status" value="1"/>
</dbReference>
<dbReference type="Pfam" id="PF17766">
    <property type="entry name" value="fn3_6"/>
    <property type="match status" value="1"/>
</dbReference>
<dbReference type="Pfam" id="PF05922">
    <property type="entry name" value="Inhibitor_I9"/>
    <property type="match status" value="1"/>
</dbReference>
<dbReference type="Pfam" id="PF00082">
    <property type="entry name" value="Peptidase_S8"/>
    <property type="match status" value="1"/>
</dbReference>
<dbReference type="PRINTS" id="PR00723">
    <property type="entry name" value="SUBTILISIN"/>
</dbReference>
<dbReference type="SUPFAM" id="SSF52743">
    <property type="entry name" value="Subtilisin-like"/>
    <property type="match status" value="1"/>
</dbReference>
<dbReference type="PROSITE" id="PS51892">
    <property type="entry name" value="SUBTILASE"/>
    <property type="match status" value="1"/>
</dbReference>
<dbReference type="PROSITE" id="PS00136">
    <property type="entry name" value="SUBTILASE_ASP"/>
    <property type="match status" value="1"/>
</dbReference>
<dbReference type="PROSITE" id="PS00138">
    <property type="entry name" value="SUBTILASE_SER"/>
    <property type="match status" value="1"/>
</dbReference>
<proteinExistence type="evidence at transcript level"/>
<keyword id="KW-0068">Autocatalytic cleavage</keyword>
<keyword id="KW-0325">Glycoprotein</keyword>
<keyword id="KW-0378">Hydrolase</keyword>
<keyword id="KW-0645">Protease</keyword>
<keyword id="KW-1185">Reference proteome</keyword>
<keyword id="KW-0964">Secreted</keyword>
<keyword id="KW-0720">Serine protease</keyword>
<keyword id="KW-0732">Signal</keyword>
<keyword id="KW-0865">Zymogen</keyword>
<sequence length="840" mass="90617">MVRVMLVRFGFLLLMISFVFLSNNTLGQQQDDDDDSAVYIVTLKQPPIVHLFEEQELKHKKSKFTPKLRPRNNSRKRHGKSKIPSVVQSHDSFLRKTLKGEKYIKLYSYHYLINGFALFINSQQAEKLSMRKEVANIVLDYSVRTATTYTPQFMGLPQGAWVKEGGFEIAGEGVIIGFIDTGIDPNHPSFNDNDSKRSYPIPKHFSGVCEVTPDFPSGSCNKKLIGARHFAQSAVTRGIFNSSEDYASPFDGDGHGTHTASVAAGNHGVPVIVSNHNFGYASGIAPRAFISVYKALYKSFGGFAADVVAAIDQAAQDGVDILSLSITPNRKPPGVATFFNPIDMALLSAVKAGIFVVQAAGNTGPAPKTMSSFSPWIFTVGASSHDRVYSNSLTLGNNVTIPGMGFAIPTDSGKMYKMISAFHALNNSTSVDKDMYVGECQDYENFDQDRVSGKLLICSYSARFVLGLSTIKQALDVAKNLSATGVIFYIDPYVLGFEINPTPMDMPGIIIPSVEDSKTLLKYYNSSIQRDVTTKEIVSFGAVAAIEGGLNANFSNRAPKVMYYSARGPDPEDNSFNDADVLKPNLVAPGNSIWGAWSSASTDSTEFEGEKFAMMSGTSMAAPHVAGVAALIKQSYPQFTPSTISSALSTTALLNDNKGSPIMAQRTYSNPDQSLYTATPSDMGSGFVNATAALDPGLVFDTSFEDYISFLCGINGSDTVVFNYTGFRCPANNTPVSGFDLNLPSITVSTLSGTQTFQRSMRNIAGNETYNVGWSPPYGVSMKVSPTQFSIAMGENQVLSVTLTVTKNSSSSSFGRIGLFGNTGHIVNIPVTVIAKIASS</sequence>
<organism>
    <name type="scientific">Arabidopsis thaliana</name>
    <name type="common">Mouse-ear cress</name>
    <dbReference type="NCBI Taxonomy" id="3702"/>
    <lineage>
        <taxon>Eukaryota</taxon>
        <taxon>Viridiplantae</taxon>
        <taxon>Streptophyta</taxon>
        <taxon>Embryophyta</taxon>
        <taxon>Tracheophyta</taxon>
        <taxon>Spermatophyta</taxon>
        <taxon>Magnoliopsida</taxon>
        <taxon>eudicotyledons</taxon>
        <taxon>Gunneridae</taxon>
        <taxon>Pentapetalae</taxon>
        <taxon>rosids</taxon>
        <taxon>malvids</taxon>
        <taxon>Brassicales</taxon>
        <taxon>Brassicaceae</taxon>
        <taxon>Camelineae</taxon>
        <taxon>Arabidopsis</taxon>
    </lineage>
</organism>
<accession>Q9FI12</accession>
<comment type="subcellular location">
    <subcellularLocation>
        <location evidence="2">Secreted</location>
    </subcellularLocation>
</comment>
<comment type="similarity">
    <text evidence="10">Belongs to the peptidase S8 family.</text>
</comment>
<name>SBT23_ARATH</name>
<reference key="1">
    <citation type="journal article" date="1999" name="DNA Res.">
        <title>Structural analysis of Arabidopsis thaliana chromosome 5. IX. Sequence features of the regions of 1,011,550 bp covered by seventeen P1 and TAC clones.</title>
        <authorList>
            <person name="Kaneko T."/>
            <person name="Katoh T."/>
            <person name="Sato S."/>
            <person name="Nakamura Y."/>
            <person name="Asamizu E."/>
            <person name="Kotani H."/>
            <person name="Miyajima N."/>
            <person name="Tabata S."/>
        </authorList>
    </citation>
    <scope>NUCLEOTIDE SEQUENCE [LARGE SCALE GENOMIC DNA]</scope>
    <source>
        <strain>cv. Columbia</strain>
    </source>
</reference>
<reference key="2">
    <citation type="journal article" date="2017" name="Plant J.">
        <title>Araport11: a complete reannotation of the Arabidopsis thaliana reference genome.</title>
        <authorList>
            <person name="Cheng C.Y."/>
            <person name="Krishnakumar V."/>
            <person name="Chan A.P."/>
            <person name="Thibaud-Nissen F."/>
            <person name="Schobel S."/>
            <person name="Town C.D."/>
        </authorList>
    </citation>
    <scope>GENOME REANNOTATION</scope>
    <source>
        <strain>cv. Columbia</strain>
    </source>
</reference>
<reference key="3">
    <citation type="submission" date="2004-06" db="EMBL/GenBank/DDBJ databases">
        <title>Arabidopsis ORF clones.</title>
        <authorList>
            <person name="Cheuk R.F."/>
            <person name="Chen H."/>
            <person name="Kim C.J."/>
            <person name="Shinn P."/>
            <person name="Carninci P."/>
            <person name="Hayashizaki Y."/>
            <person name="Ishida J."/>
            <person name="Kamiya A."/>
            <person name="Kawai J."/>
            <person name="Narusaka M."/>
            <person name="Sakurai T."/>
            <person name="Satou M."/>
            <person name="Seki M."/>
            <person name="Shinozaki K."/>
            <person name="Ecker J.R."/>
        </authorList>
    </citation>
    <scope>NUCLEOTIDE SEQUENCE [LARGE SCALE MRNA]</scope>
    <source>
        <strain>cv. Columbia</strain>
    </source>
</reference>
<reference key="4">
    <citation type="submission" date="2006-07" db="EMBL/GenBank/DDBJ databases">
        <title>Large-scale analysis of RIKEN Arabidopsis full-length (RAFL) cDNAs.</title>
        <authorList>
            <person name="Totoki Y."/>
            <person name="Seki M."/>
            <person name="Ishida J."/>
            <person name="Nakajima M."/>
            <person name="Enju A."/>
            <person name="Kamiya A."/>
            <person name="Narusaka M."/>
            <person name="Shin-i T."/>
            <person name="Nakagawa M."/>
            <person name="Sakamoto N."/>
            <person name="Oishi K."/>
            <person name="Kohara Y."/>
            <person name="Kobayashi M."/>
            <person name="Toyoda A."/>
            <person name="Sakaki Y."/>
            <person name="Sakurai T."/>
            <person name="Iida K."/>
            <person name="Akiyama K."/>
            <person name="Satou M."/>
            <person name="Toyoda T."/>
            <person name="Konagaya A."/>
            <person name="Carninci P."/>
            <person name="Kawai J."/>
            <person name="Hayashizaki Y."/>
            <person name="Shinozaki K."/>
        </authorList>
    </citation>
    <scope>NUCLEOTIDE SEQUENCE [LARGE SCALE MRNA]</scope>
    <source>
        <strain>cv. Columbia</strain>
    </source>
</reference>
<reference key="5">
    <citation type="journal article" date="2005" name="PLoS Comput. Biol.">
        <title>Inferring hypotheses on functional relationships of genes: Analysis of the Arabidopsis thaliana subtilase gene family.</title>
        <authorList>
            <person name="Rautengarten C."/>
            <person name="Steinhauser D."/>
            <person name="Bussis D."/>
            <person name="Stintzi A."/>
            <person name="Schaller A."/>
            <person name="Kopka J."/>
            <person name="Altmann T."/>
        </authorList>
    </citation>
    <scope>GENE FAMILY</scope>
    <scope>NOMENCLATURE</scope>
</reference>
<gene>
    <name evidence="9" type="primary">SBT2.3</name>
    <name evidence="11" type="ordered locus">At5g44530</name>
    <name evidence="12" type="ORF">MFC16.21</name>
</gene>
<protein>
    <recommendedName>
        <fullName evidence="9">Subtilisin-like protease SBT2.3</fullName>
        <ecNumber evidence="7">3.4.21.-</ecNumber>
    </recommendedName>
    <alternativeName>
        <fullName evidence="9">Subtilase subfamily 2 member 3</fullName>
        <shortName evidence="9">AtSBT2.3</shortName>
    </alternativeName>
</protein>
<evidence type="ECO:0000250" key="1">
    <source>
        <dbReference type="UniProtKB" id="Q39547"/>
    </source>
</evidence>
<evidence type="ECO:0000250" key="2">
    <source>
        <dbReference type="UniProtKB" id="Q84WS0"/>
    </source>
</evidence>
<evidence type="ECO:0000250" key="3">
    <source>
        <dbReference type="UniProtKB" id="Q9MAP7"/>
    </source>
</evidence>
<evidence type="ECO:0000255" key="4"/>
<evidence type="ECO:0000255" key="5">
    <source>
        <dbReference type="PROSITE-ProRule" id="PRU00498"/>
    </source>
</evidence>
<evidence type="ECO:0000255" key="6">
    <source>
        <dbReference type="PROSITE-ProRule" id="PRU01240"/>
    </source>
</evidence>
<evidence type="ECO:0000255" key="7">
    <source>
        <dbReference type="PROSITE-ProRule" id="PRU10082"/>
    </source>
</evidence>
<evidence type="ECO:0000256" key="8">
    <source>
        <dbReference type="SAM" id="MobiDB-lite"/>
    </source>
</evidence>
<evidence type="ECO:0000303" key="9">
    <source>
    </source>
</evidence>
<evidence type="ECO:0000305" key="10"/>
<evidence type="ECO:0000312" key="11">
    <source>
        <dbReference type="Araport" id="AT5G44530"/>
    </source>
</evidence>
<evidence type="ECO:0000312" key="12">
    <source>
        <dbReference type="EMBL" id="BAB09160.1"/>
    </source>
</evidence>
<feature type="signal peptide" evidence="4">
    <location>
        <begin position="1"/>
        <end position="27"/>
    </location>
</feature>
<feature type="propeptide" id="PRO_0000435184" description="Activation peptide" evidence="3">
    <location>
        <begin position="28"/>
        <end position="146"/>
    </location>
</feature>
<feature type="chain" id="PRO_5004326410" description="Subtilisin-like protease SBT2.3">
    <location>
        <begin position="147"/>
        <end status="unknown"/>
    </location>
</feature>
<feature type="propeptide" id="PRO_0000435185" evidence="1">
    <location>
        <begin status="unknown"/>
        <end position="840"/>
    </location>
</feature>
<feature type="domain" description="Inhibitor I9" evidence="4">
    <location>
        <begin position="38"/>
        <end position="146"/>
    </location>
</feature>
<feature type="domain" description="Peptidase S8" evidence="6">
    <location>
        <begin position="148"/>
        <end position="694"/>
    </location>
</feature>
<feature type="domain" description="PA" evidence="4">
    <location>
        <begin position="418"/>
        <end position="513"/>
    </location>
</feature>
<feature type="region of interest" description="Disordered" evidence="8">
    <location>
        <begin position="61"/>
        <end position="85"/>
    </location>
</feature>
<feature type="compositionally biased region" description="Basic residues" evidence="8">
    <location>
        <begin position="61"/>
        <end position="81"/>
    </location>
</feature>
<feature type="active site" description="Charge relay system" evidence="6">
    <location>
        <position position="180"/>
    </location>
</feature>
<feature type="active site" description="Charge relay system" evidence="6">
    <location>
        <position position="255"/>
    </location>
</feature>
<feature type="active site" description="Charge relay system" evidence="6">
    <location>
        <position position="619"/>
    </location>
</feature>
<feature type="glycosylation site" description="N-linked (GlcNAc...) asparagine" evidence="5">
    <location>
        <position position="72"/>
    </location>
</feature>
<feature type="glycosylation site" description="N-linked (GlcNAc...) asparagine" evidence="5">
    <location>
        <position position="193"/>
    </location>
</feature>
<feature type="glycosylation site" description="N-linked (GlcNAc...) asparagine" evidence="5">
    <location>
        <position position="241"/>
    </location>
</feature>
<feature type="glycosylation site" description="N-linked (GlcNAc...) asparagine" evidence="5">
    <location>
        <position position="398"/>
    </location>
</feature>
<feature type="glycosylation site" description="N-linked (GlcNAc...) asparagine" evidence="5">
    <location>
        <position position="427"/>
    </location>
</feature>
<feature type="glycosylation site" description="N-linked (GlcNAc...) asparagine" evidence="5">
    <location>
        <position position="480"/>
    </location>
</feature>
<feature type="glycosylation site" description="N-linked (GlcNAc...) asparagine" evidence="5">
    <location>
        <position position="525"/>
    </location>
</feature>
<feature type="glycosylation site" description="N-linked (GlcNAc...) asparagine" evidence="5">
    <location>
        <position position="553"/>
    </location>
</feature>
<feature type="glycosylation site" description="N-linked (GlcNAc...) asparagine" evidence="5">
    <location>
        <position position="689"/>
    </location>
</feature>
<feature type="glycosylation site" description="N-linked (GlcNAc...) asparagine" evidence="5">
    <location>
        <position position="715"/>
    </location>
</feature>
<feature type="glycosylation site" description="N-linked (GlcNAc...) asparagine" evidence="5">
    <location>
        <position position="723"/>
    </location>
</feature>
<feature type="glycosylation site" description="N-linked (GlcNAc...) asparagine" evidence="5">
    <location>
        <position position="767"/>
    </location>
</feature>
<feature type="glycosylation site" description="N-linked (GlcNAc...) asparagine" evidence="5">
    <location>
        <position position="808"/>
    </location>
</feature>